<sequence>MIKWPWKAQEITQNADWLWDDALAIPLLVNLTAQEQARLIALAERFLQQKRLVALQGVELDSLKSARIALIFCLPILELGLEWLDGFHEVLIYPAPFVVDDEWEDDIGLVHSQRVVQSGQSWQQGPIILNWLDIQDSFDASGFNLIIHEVAHKLDMRNGDRASGIPFIPLRDVAGWEHDLHAAMNNIQDEIDLVGENAASIDAYAATDPAECFAVLSEYFFSAPELFAPRFPALWQRFCQFYRQDPSQRLR</sequence>
<reference key="1">
    <citation type="submission" date="2007-11" db="EMBL/GenBank/DDBJ databases">
        <authorList>
            <consortium name="The Salmonella enterica serovar Arizonae Genome Sequencing Project"/>
            <person name="McClelland M."/>
            <person name="Sanderson E.K."/>
            <person name="Porwollik S."/>
            <person name="Spieth J."/>
            <person name="Clifton W.S."/>
            <person name="Fulton R."/>
            <person name="Chunyan W."/>
            <person name="Wollam A."/>
            <person name="Shah N."/>
            <person name="Pepin K."/>
            <person name="Bhonagiri V."/>
            <person name="Nash W."/>
            <person name="Johnson M."/>
            <person name="Thiruvilangam P."/>
            <person name="Wilson R."/>
        </authorList>
    </citation>
    <scope>NUCLEOTIDE SEQUENCE [LARGE SCALE GENOMIC DNA]</scope>
    <source>
        <strain>ATCC BAA-731 / CDC346-86 / RSK2980</strain>
    </source>
</reference>
<gene>
    <name evidence="1" type="primary">mtfA</name>
    <name type="ordered locus">SARI_00903</name>
</gene>
<evidence type="ECO:0000255" key="1">
    <source>
        <dbReference type="HAMAP-Rule" id="MF_01593"/>
    </source>
</evidence>
<keyword id="KW-0031">Aminopeptidase</keyword>
<keyword id="KW-0963">Cytoplasm</keyword>
<keyword id="KW-0378">Hydrolase</keyword>
<keyword id="KW-0479">Metal-binding</keyword>
<keyword id="KW-0482">Metalloprotease</keyword>
<keyword id="KW-0645">Protease</keyword>
<keyword id="KW-1185">Reference proteome</keyword>
<keyword id="KW-0862">Zinc</keyword>
<accession>A9MLV4</accession>
<dbReference type="EC" id="3.4.11.-" evidence="1"/>
<dbReference type="EMBL" id="CP000880">
    <property type="protein sequence ID" value="ABX20817.1"/>
    <property type="molecule type" value="Genomic_DNA"/>
</dbReference>
<dbReference type="SMR" id="A9MLV4"/>
<dbReference type="STRING" id="41514.SARI_00903"/>
<dbReference type="MEROPS" id="M90.001"/>
<dbReference type="KEGG" id="ses:SARI_00903"/>
<dbReference type="HOGENOM" id="CLU_063037_2_0_6"/>
<dbReference type="Proteomes" id="UP000002084">
    <property type="component" value="Chromosome"/>
</dbReference>
<dbReference type="GO" id="GO:0005829">
    <property type="term" value="C:cytosol"/>
    <property type="evidence" value="ECO:0007669"/>
    <property type="project" value="TreeGrafter"/>
</dbReference>
<dbReference type="GO" id="GO:0004177">
    <property type="term" value="F:aminopeptidase activity"/>
    <property type="evidence" value="ECO:0007669"/>
    <property type="project" value="UniProtKB-UniRule"/>
</dbReference>
<dbReference type="GO" id="GO:0008237">
    <property type="term" value="F:metallopeptidase activity"/>
    <property type="evidence" value="ECO:0007669"/>
    <property type="project" value="UniProtKB-UniRule"/>
</dbReference>
<dbReference type="GO" id="GO:0008270">
    <property type="term" value="F:zinc ion binding"/>
    <property type="evidence" value="ECO:0007669"/>
    <property type="project" value="UniProtKB-UniRule"/>
</dbReference>
<dbReference type="GO" id="GO:0006508">
    <property type="term" value="P:proteolysis"/>
    <property type="evidence" value="ECO:0007669"/>
    <property type="project" value="UniProtKB-KW"/>
</dbReference>
<dbReference type="CDD" id="cd20169">
    <property type="entry name" value="Peptidase_M90_mtfA"/>
    <property type="match status" value="1"/>
</dbReference>
<dbReference type="FunFam" id="1.10.472.150:FF:000001">
    <property type="entry name" value="Protein MtfA"/>
    <property type="match status" value="1"/>
</dbReference>
<dbReference type="FunFam" id="3.40.390.10:FF:000012">
    <property type="entry name" value="Protein MtfA"/>
    <property type="match status" value="1"/>
</dbReference>
<dbReference type="Gene3D" id="3.40.390.10">
    <property type="entry name" value="Collagenase (Catalytic Domain)"/>
    <property type="match status" value="1"/>
</dbReference>
<dbReference type="Gene3D" id="1.10.472.150">
    <property type="entry name" value="Glucose-regulated metallo-peptidase M90, N-terminal domain"/>
    <property type="match status" value="1"/>
</dbReference>
<dbReference type="HAMAP" id="MF_01593">
    <property type="entry name" value="MtfA"/>
    <property type="match status" value="1"/>
</dbReference>
<dbReference type="InterPro" id="IPR024079">
    <property type="entry name" value="MetalloPept_cat_dom_sf"/>
</dbReference>
<dbReference type="InterPro" id="IPR057256">
    <property type="entry name" value="MtfA_enterob"/>
</dbReference>
<dbReference type="InterPro" id="IPR010384">
    <property type="entry name" value="MtfA_fam"/>
</dbReference>
<dbReference type="InterPro" id="IPR042252">
    <property type="entry name" value="MtfA_N"/>
</dbReference>
<dbReference type="NCBIfam" id="NF011939">
    <property type="entry name" value="PRK15410.1"/>
    <property type="match status" value="1"/>
</dbReference>
<dbReference type="PANTHER" id="PTHR30164">
    <property type="entry name" value="MTFA PEPTIDASE"/>
    <property type="match status" value="1"/>
</dbReference>
<dbReference type="PANTHER" id="PTHR30164:SF2">
    <property type="entry name" value="PROTEIN MTFA"/>
    <property type="match status" value="1"/>
</dbReference>
<dbReference type="Pfam" id="PF06167">
    <property type="entry name" value="Peptidase_M90"/>
    <property type="match status" value="1"/>
</dbReference>
<dbReference type="SUPFAM" id="SSF55486">
    <property type="entry name" value="Metalloproteases ('zincins'), catalytic domain"/>
    <property type="match status" value="1"/>
</dbReference>
<feature type="chain" id="PRO_0000381774" description="Mlc titration factor A">
    <location>
        <begin position="1"/>
        <end position="251"/>
    </location>
</feature>
<feature type="binding site" evidence="1">
    <location>
        <position position="111"/>
    </location>
    <ligand>
        <name>Zn(2+)</name>
        <dbReference type="ChEBI" id="CHEBI:29105"/>
    </ligand>
</feature>
<feature type="binding site" evidence="1">
    <location>
        <position position="148"/>
    </location>
    <ligand>
        <name>Zn(2+)</name>
        <dbReference type="ChEBI" id="CHEBI:29105"/>
    </ligand>
</feature>
<feature type="binding site" evidence="1">
    <location>
        <position position="152"/>
    </location>
    <ligand>
        <name>Zn(2+)</name>
        <dbReference type="ChEBI" id="CHEBI:29105"/>
    </ligand>
</feature>
<feature type="binding site" evidence="1">
    <location>
        <position position="211"/>
    </location>
    <ligand>
        <name>Zn(2+)</name>
        <dbReference type="ChEBI" id="CHEBI:29105"/>
    </ligand>
</feature>
<comment type="function">
    <text evidence="1">Involved in the modulation of the activity of the glucose-phosphotransferase system (glucose-PTS). Interacts with the transcriptional repressor Mlc, preventing its interaction with DNA and leading to the modulation of expression of genes regulated by Mlc, including ptsG, which encodes the PTS system glucose-specific EIICB component.</text>
</comment>
<comment type="function">
    <text evidence="1">Shows zinc-dependent metallopeptidase activity.</text>
</comment>
<comment type="cofactor">
    <cofactor evidence="1">
        <name>Zn(2+)</name>
        <dbReference type="ChEBI" id="CHEBI:29105"/>
    </cofactor>
    <text evidence="1">Binds 1 zinc ion per subunit.</text>
</comment>
<comment type="subunit">
    <text evidence="1">Interacts with Mlc.</text>
</comment>
<comment type="subcellular location">
    <subcellularLocation>
        <location evidence="1">Cytoplasm</location>
    </subcellularLocation>
</comment>
<comment type="similarity">
    <text evidence="1">Belongs to the MtfA family.</text>
</comment>
<name>MTFA_SALAR</name>
<organism>
    <name type="scientific">Salmonella arizonae (strain ATCC BAA-731 / CDC346-86 / RSK2980)</name>
    <dbReference type="NCBI Taxonomy" id="41514"/>
    <lineage>
        <taxon>Bacteria</taxon>
        <taxon>Pseudomonadati</taxon>
        <taxon>Pseudomonadota</taxon>
        <taxon>Gammaproteobacteria</taxon>
        <taxon>Enterobacterales</taxon>
        <taxon>Enterobacteriaceae</taxon>
        <taxon>Salmonella</taxon>
    </lineage>
</organism>
<protein>
    <recommendedName>
        <fullName evidence="1">Mlc titration factor A</fullName>
    </recommendedName>
    <alternativeName>
        <fullName evidence="1">Probable zinc metallopeptidase MtfA</fullName>
        <ecNumber evidence="1">3.4.11.-</ecNumber>
    </alternativeName>
</protein>
<proteinExistence type="inferred from homology"/>